<gene>
    <name evidence="6" type="primary">GL1-5</name>
    <name evidence="5" type="synonym">WDA1</name>
    <name evidence="9" type="ordered locus">LOC_Os10g33250</name>
    <name evidence="10" type="ordered locus">Os10g0471100</name>
    <name evidence="12" type="ORF">OsJ_31858</name>
    <name evidence="8" type="ORF">OSJNBa0079L16.17</name>
    <name evidence="11" type="ORF">OSNPB_100471100</name>
</gene>
<comment type="function">
    <text evidence="1 3">Aldehyde decarbonylase involved in the conversion of aldehydes to alkanes (PubMed:17138699). Core component of a very-long-chain alkane synthesis complex (By similarity). Required for the biosynthesis of very-long-chain fatty acids (including polyesters) in cuticles, anther tapetum and pollen exine (PubMed:17138699).</text>
</comment>
<comment type="catalytic activity">
    <reaction evidence="3">
        <text>a long-chain fatty aldehyde + 2 NADPH + O2 + H(+) = a long-chain alkane + formate + 2 NADP(+) + H2O</text>
        <dbReference type="Rhea" id="RHEA:21440"/>
        <dbReference type="ChEBI" id="CHEBI:15377"/>
        <dbReference type="ChEBI" id="CHEBI:15378"/>
        <dbReference type="ChEBI" id="CHEBI:15379"/>
        <dbReference type="ChEBI" id="CHEBI:15740"/>
        <dbReference type="ChEBI" id="CHEBI:17176"/>
        <dbReference type="ChEBI" id="CHEBI:57783"/>
        <dbReference type="ChEBI" id="CHEBI:58349"/>
        <dbReference type="ChEBI" id="CHEBI:83563"/>
        <dbReference type="EC" id="4.1.99.5"/>
    </reaction>
</comment>
<comment type="subunit">
    <text evidence="1">Homodimer.</text>
</comment>
<comment type="subcellular location">
    <subcellularLocation>
        <location evidence="1">Endoplasmic reticulum membrane</location>
        <topology evidence="1">Multi-pass membrane protein</topology>
    </subcellularLocation>
</comment>
<comment type="tissue specificity">
    <text evidence="3 4">Expressed in panicles, developing spikelets, stamens and hulls and, at low levels, in roots, developing seeds, flag leaves and seedling shoots (PubMed:17138699, PubMed:19322663). Strongly expressed in the epidermal cells of anthers (PubMed:17138699).</text>
</comment>
<comment type="developmental stage">
    <text evidence="3">In developing spikelets, expressed in all floral organs from the premeiosis stage to the heading stage. Also present in the outer and inner epidermis and trichomes of the palea/lemma, lodicules, stigmas, and anthers. In anthers at the vacuolated pollen stage, expressed strongly in the epidermis but only weakly in the tapetum, endothecium, and connective tissue. In vegetative tissue, confinde to collar regions (between the leaf sheath and the leaf blade) and the base of shoots.</text>
</comment>
<comment type="induction">
    <text evidence="4">Induced by salt stress and abscisic acid (ABA).</text>
</comment>
<comment type="disruption phenotype">
    <text evidence="3">Male-sterile plants characterized by small and white anthers lacking mature pollen grains. Defects in the biosynthesis of very-long-chain fatty acids (including polyesters) in cuticles and in the innermost layer of the anther wall (the tapetum). Lack of epicuticular wax crystals in the outer layer of the anther and severely retarded microspore development and finally disrupted as a result of defective pollen exine formation.</text>
</comment>
<comment type="similarity">
    <text evidence="7">Belongs to the sterol desaturase family.</text>
</comment>
<comment type="sequence caution" evidence="7">
    <conflict type="frameshift">
        <sequence resource="EMBL" id="AK100751"/>
    </conflict>
</comment>
<protein>
    <recommendedName>
        <fullName evidence="7">Very-long-chain aldehyde decarbonylase GL1-5</fullName>
        <ecNumber evidence="1">4.1.99.5</ecNumber>
    </recommendedName>
    <alternativeName>
        <fullName evidence="6">Protein GLOSSY 1-5</fullName>
    </alternativeName>
    <alternativeName>
        <fullName evidence="5">Protein WAX-DEFICIENT ANTHER 1</fullName>
    </alternativeName>
</protein>
<organism>
    <name type="scientific">Oryza sativa subsp. japonica</name>
    <name type="common">Rice</name>
    <dbReference type="NCBI Taxonomy" id="39947"/>
    <lineage>
        <taxon>Eukaryota</taxon>
        <taxon>Viridiplantae</taxon>
        <taxon>Streptophyta</taxon>
        <taxon>Embryophyta</taxon>
        <taxon>Tracheophyta</taxon>
        <taxon>Spermatophyta</taxon>
        <taxon>Magnoliopsida</taxon>
        <taxon>Liliopsida</taxon>
        <taxon>Poales</taxon>
        <taxon>Poaceae</taxon>
        <taxon>BOP clade</taxon>
        <taxon>Oryzoideae</taxon>
        <taxon>Oryzeae</taxon>
        <taxon>Oryzinae</taxon>
        <taxon>Oryza</taxon>
        <taxon>Oryza sativa</taxon>
    </lineage>
</organism>
<dbReference type="EC" id="4.1.99.5" evidence="1"/>
<dbReference type="EMBL" id="AC026815">
    <property type="protein sequence ID" value="AAG21908.1"/>
    <property type="molecule type" value="Genomic_DNA"/>
</dbReference>
<dbReference type="EMBL" id="DP000086">
    <property type="protein sequence ID" value="AAP54228.1"/>
    <property type="molecule type" value="Genomic_DNA"/>
</dbReference>
<dbReference type="EMBL" id="AP008216">
    <property type="protein sequence ID" value="BAF26740.1"/>
    <property type="molecule type" value="Genomic_DNA"/>
</dbReference>
<dbReference type="EMBL" id="AP014966">
    <property type="protein sequence ID" value="BAT11256.1"/>
    <property type="molecule type" value="Genomic_DNA"/>
</dbReference>
<dbReference type="EMBL" id="CM000147">
    <property type="protein sequence ID" value="EEE51118.1"/>
    <property type="molecule type" value="Genomic_DNA"/>
</dbReference>
<dbReference type="EMBL" id="AK100751">
    <property type="status" value="NOT_ANNOTATED_CDS"/>
    <property type="molecule type" value="mRNA"/>
</dbReference>
<dbReference type="FunCoup" id="Q7XDI3">
    <property type="interactions" value="157"/>
</dbReference>
<dbReference type="STRING" id="39947.Q7XDI3"/>
<dbReference type="PaxDb" id="39947-Q7XDI3"/>
<dbReference type="EnsemblPlants" id="Os10t0471100-01">
    <property type="protein sequence ID" value="Os10t0471100-01"/>
    <property type="gene ID" value="Os10g0471100"/>
</dbReference>
<dbReference type="Gramene" id="Os10t0471100-01">
    <property type="protein sequence ID" value="Os10t0471100-01"/>
    <property type="gene ID" value="Os10g0471100"/>
</dbReference>
<dbReference type="KEGG" id="dosa:Os10g0471100"/>
<dbReference type="eggNOG" id="ENOG502QR3T">
    <property type="taxonomic scope" value="Eukaryota"/>
</dbReference>
<dbReference type="HOGENOM" id="CLU_017842_1_0_1"/>
<dbReference type="InParanoid" id="Q7XDI3"/>
<dbReference type="OMA" id="PRMIRNN"/>
<dbReference type="Proteomes" id="UP000000763">
    <property type="component" value="Chromosome 10"/>
</dbReference>
<dbReference type="Proteomes" id="UP000007752">
    <property type="component" value="Chromosome 10"/>
</dbReference>
<dbReference type="Proteomes" id="UP000059680">
    <property type="component" value="Chromosome 10"/>
</dbReference>
<dbReference type="ExpressionAtlas" id="Q7XDI3">
    <property type="expression patterns" value="baseline and differential"/>
</dbReference>
<dbReference type="GO" id="GO:0005783">
    <property type="term" value="C:endoplasmic reticulum"/>
    <property type="evidence" value="ECO:0000314"/>
    <property type="project" value="Gramene"/>
</dbReference>
<dbReference type="GO" id="GO:0005789">
    <property type="term" value="C:endoplasmic reticulum membrane"/>
    <property type="evidence" value="ECO:0007669"/>
    <property type="project" value="UniProtKB-SubCell"/>
</dbReference>
<dbReference type="GO" id="GO:0043668">
    <property type="term" value="C:exine"/>
    <property type="evidence" value="ECO:0000315"/>
    <property type="project" value="Gramene"/>
</dbReference>
<dbReference type="GO" id="GO:0071771">
    <property type="term" value="F:aldehyde oxygenase (deformylating) activity"/>
    <property type="evidence" value="ECO:0007669"/>
    <property type="project" value="UniProtKB-EC"/>
</dbReference>
<dbReference type="GO" id="GO:0005506">
    <property type="term" value="F:iron ion binding"/>
    <property type="evidence" value="ECO:0007669"/>
    <property type="project" value="InterPro"/>
</dbReference>
<dbReference type="GO" id="GO:0016491">
    <property type="term" value="F:oxidoreductase activity"/>
    <property type="evidence" value="ECO:0007669"/>
    <property type="project" value="InterPro"/>
</dbReference>
<dbReference type="GO" id="GO:0048653">
    <property type="term" value="P:anther development"/>
    <property type="evidence" value="ECO:0000315"/>
    <property type="project" value="Gramene"/>
</dbReference>
<dbReference type="GO" id="GO:0048658">
    <property type="term" value="P:anther wall tapetum development"/>
    <property type="evidence" value="ECO:0000315"/>
    <property type="project" value="UniProtKB"/>
</dbReference>
<dbReference type="GO" id="GO:0042335">
    <property type="term" value="P:cuticle development"/>
    <property type="evidence" value="ECO:0000315"/>
    <property type="project" value="UniProtKB"/>
</dbReference>
<dbReference type="GO" id="GO:0010143">
    <property type="term" value="P:cutin biosynthetic process"/>
    <property type="evidence" value="ECO:0000314"/>
    <property type="project" value="Gramene"/>
</dbReference>
<dbReference type="GO" id="GO:0010584">
    <property type="term" value="P:pollen exine formation"/>
    <property type="evidence" value="ECO:0000315"/>
    <property type="project" value="UniProtKB"/>
</dbReference>
<dbReference type="GO" id="GO:0009737">
    <property type="term" value="P:response to abscisic acid"/>
    <property type="evidence" value="ECO:0000270"/>
    <property type="project" value="UniProtKB"/>
</dbReference>
<dbReference type="GO" id="GO:0009651">
    <property type="term" value="P:response to salt stress"/>
    <property type="evidence" value="ECO:0000270"/>
    <property type="project" value="UniProtKB"/>
</dbReference>
<dbReference type="GO" id="GO:0010025">
    <property type="term" value="P:wax biosynthetic process"/>
    <property type="evidence" value="ECO:0000314"/>
    <property type="project" value="Gramene"/>
</dbReference>
<dbReference type="InterPro" id="IPR021940">
    <property type="entry name" value="CER1-like_C"/>
</dbReference>
<dbReference type="InterPro" id="IPR006694">
    <property type="entry name" value="Fatty_acid_hydroxylase"/>
</dbReference>
<dbReference type="InterPro" id="IPR050307">
    <property type="entry name" value="Sterol_Desaturase_Related"/>
</dbReference>
<dbReference type="PANTHER" id="PTHR11863">
    <property type="entry name" value="STEROL DESATURASE"/>
    <property type="match status" value="1"/>
</dbReference>
<dbReference type="Pfam" id="PF12076">
    <property type="entry name" value="CER1-like_C"/>
    <property type="match status" value="1"/>
</dbReference>
<dbReference type="Pfam" id="PF04116">
    <property type="entry name" value="FA_hydroxylase"/>
    <property type="match status" value="1"/>
</dbReference>
<keyword id="KW-0256">Endoplasmic reticulum</keyword>
<keyword id="KW-0456">Lyase</keyword>
<keyword id="KW-0472">Membrane</keyword>
<keyword id="KW-0521">NADP</keyword>
<keyword id="KW-1185">Reference proteome</keyword>
<keyword id="KW-0812">Transmembrane</keyword>
<keyword id="KW-1133">Transmembrane helix</keyword>
<evidence type="ECO:0000250" key="1">
    <source>
        <dbReference type="UniProtKB" id="F4HVY0"/>
    </source>
</evidence>
<evidence type="ECO:0000255" key="2"/>
<evidence type="ECO:0000269" key="3">
    <source>
    </source>
</evidence>
<evidence type="ECO:0000269" key="4">
    <source>
    </source>
</evidence>
<evidence type="ECO:0000303" key="5">
    <source>
    </source>
</evidence>
<evidence type="ECO:0000303" key="6">
    <source>
    </source>
</evidence>
<evidence type="ECO:0000305" key="7"/>
<evidence type="ECO:0000312" key="8">
    <source>
        <dbReference type="EMBL" id="AAG21908.1"/>
    </source>
</evidence>
<evidence type="ECO:0000312" key="9">
    <source>
        <dbReference type="EMBL" id="AAP54228.1"/>
    </source>
</evidence>
<evidence type="ECO:0000312" key="10">
    <source>
        <dbReference type="EMBL" id="BAF26740.1"/>
    </source>
</evidence>
<evidence type="ECO:0000312" key="11">
    <source>
        <dbReference type="EMBL" id="BAT11256.1"/>
    </source>
</evidence>
<evidence type="ECO:0000312" key="12">
    <source>
        <dbReference type="EMBL" id="EEE51118.1"/>
    </source>
</evidence>
<proteinExistence type="evidence at protein level"/>
<reference key="1">
    <citation type="journal article" date="2003" name="Science">
        <title>In-depth view of structure, activity, and evolution of rice chromosome 10.</title>
        <authorList>
            <person name="Yu Y."/>
            <person name="Rambo T."/>
            <person name="Currie J."/>
            <person name="Saski C."/>
            <person name="Kim H.-R."/>
            <person name="Collura K."/>
            <person name="Thompson S."/>
            <person name="Simmons J."/>
            <person name="Yang T.-J."/>
            <person name="Nah G."/>
            <person name="Patel A.J."/>
            <person name="Thurmond S."/>
            <person name="Henry D."/>
            <person name="Oates R."/>
            <person name="Palmer M."/>
            <person name="Pries G."/>
            <person name="Gibson J."/>
            <person name="Anderson H."/>
            <person name="Paradkar M."/>
            <person name="Crane L."/>
            <person name="Dale J."/>
            <person name="Carver M.B."/>
            <person name="Wood T."/>
            <person name="Frisch D."/>
            <person name="Engler F."/>
            <person name="Soderlund C."/>
            <person name="Palmer L.E."/>
            <person name="Teytelman L."/>
            <person name="Nascimento L."/>
            <person name="De la Bastide M."/>
            <person name="Spiegel L."/>
            <person name="Ware D."/>
            <person name="O'Shaughnessy A."/>
            <person name="Dike S."/>
            <person name="Dedhia N."/>
            <person name="Preston R."/>
            <person name="Huang E."/>
            <person name="Ferraro K."/>
            <person name="Kuit K."/>
            <person name="Miller B."/>
            <person name="Zutavern T."/>
            <person name="Katzenberger F."/>
            <person name="Muller S."/>
            <person name="Balija V."/>
            <person name="Martienssen R.A."/>
            <person name="Stein L."/>
            <person name="Minx P."/>
            <person name="Johnson D."/>
            <person name="Cordum H."/>
            <person name="Mardis E."/>
            <person name="Cheng Z."/>
            <person name="Jiang J."/>
            <person name="Wilson R."/>
            <person name="McCombie W.R."/>
            <person name="Wing R.A."/>
            <person name="Yuan Q."/>
            <person name="Ouyang S."/>
            <person name="Liu J."/>
            <person name="Jones K.M."/>
            <person name="Gansberger K."/>
            <person name="Moffat K."/>
            <person name="Hill J."/>
            <person name="Tsitrin T."/>
            <person name="Overton L."/>
            <person name="Bera J."/>
            <person name="Kim M."/>
            <person name="Jin S."/>
            <person name="Tallon L."/>
            <person name="Ciecko A."/>
            <person name="Pai G."/>
            <person name="Van Aken S."/>
            <person name="Utterback T."/>
            <person name="Reidmuller S."/>
            <person name="Bormann J."/>
            <person name="Feldblyum T."/>
            <person name="Hsiao J."/>
            <person name="Zismann V."/>
            <person name="Blunt S."/>
            <person name="de Vazeille A.R."/>
            <person name="Shaffer T."/>
            <person name="Koo H."/>
            <person name="Suh B."/>
            <person name="Yang Q."/>
            <person name="Haas B."/>
            <person name="Peterson J."/>
            <person name="Pertea M."/>
            <person name="Volfovsky N."/>
            <person name="Wortman J."/>
            <person name="White O."/>
            <person name="Salzberg S.L."/>
            <person name="Fraser C.M."/>
            <person name="Buell C.R."/>
            <person name="Messing J."/>
            <person name="Song R."/>
            <person name="Fuks G."/>
            <person name="Llaca V."/>
            <person name="Kovchak S."/>
            <person name="Young S."/>
            <person name="Bowers J.E."/>
            <person name="Paterson A.H."/>
            <person name="Johns M.A."/>
            <person name="Mao L."/>
            <person name="Pan H."/>
            <person name="Dean R.A."/>
        </authorList>
    </citation>
    <scope>NUCLEOTIDE SEQUENCE [LARGE SCALE GENOMIC DNA]</scope>
    <source>
        <strain>cv. Nipponbare</strain>
    </source>
</reference>
<reference key="2">
    <citation type="journal article" date="2005" name="Nature">
        <title>The map-based sequence of the rice genome.</title>
        <authorList>
            <consortium name="International rice genome sequencing project (IRGSP)"/>
        </authorList>
    </citation>
    <scope>NUCLEOTIDE SEQUENCE [LARGE SCALE GENOMIC DNA]</scope>
    <source>
        <strain>cv. Nipponbare</strain>
    </source>
</reference>
<reference key="3">
    <citation type="journal article" date="2008" name="Nucleic Acids Res.">
        <title>The rice annotation project database (RAP-DB): 2008 update.</title>
        <authorList>
            <consortium name="The rice annotation project (RAP)"/>
        </authorList>
    </citation>
    <scope>GENOME REANNOTATION</scope>
    <source>
        <strain>cv. Nipponbare</strain>
    </source>
</reference>
<reference key="4">
    <citation type="journal article" date="2013" name="Rice">
        <title>Improvement of the Oryza sativa Nipponbare reference genome using next generation sequence and optical map data.</title>
        <authorList>
            <person name="Kawahara Y."/>
            <person name="de la Bastide M."/>
            <person name="Hamilton J.P."/>
            <person name="Kanamori H."/>
            <person name="McCombie W.R."/>
            <person name="Ouyang S."/>
            <person name="Schwartz D.C."/>
            <person name="Tanaka T."/>
            <person name="Wu J."/>
            <person name="Zhou S."/>
            <person name="Childs K.L."/>
            <person name="Davidson R.M."/>
            <person name="Lin H."/>
            <person name="Quesada-Ocampo L."/>
            <person name="Vaillancourt B."/>
            <person name="Sakai H."/>
            <person name="Lee S.S."/>
            <person name="Kim J."/>
            <person name="Numa H."/>
            <person name="Itoh T."/>
            <person name="Buell C.R."/>
            <person name="Matsumoto T."/>
        </authorList>
    </citation>
    <scope>GENOME REANNOTATION</scope>
    <source>
        <strain>cv. Nipponbare</strain>
    </source>
</reference>
<reference key="5">
    <citation type="journal article" date="2005" name="PLoS Biol.">
        <title>The genomes of Oryza sativa: a history of duplications.</title>
        <authorList>
            <person name="Yu J."/>
            <person name="Wang J."/>
            <person name="Lin W."/>
            <person name="Li S."/>
            <person name="Li H."/>
            <person name="Zhou J."/>
            <person name="Ni P."/>
            <person name="Dong W."/>
            <person name="Hu S."/>
            <person name="Zeng C."/>
            <person name="Zhang J."/>
            <person name="Zhang Y."/>
            <person name="Li R."/>
            <person name="Xu Z."/>
            <person name="Li S."/>
            <person name="Li X."/>
            <person name="Zheng H."/>
            <person name="Cong L."/>
            <person name="Lin L."/>
            <person name="Yin J."/>
            <person name="Geng J."/>
            <person name="Li G."/>
            <person name="Shi J."/>
            <person name="Liu J."/>
            <person name="Lv H."/>
            <person name="Li J."/>
            <person name="Wang J."/>
            <person name="Deng Y."/>
            <person name="Ran L."/>
            <person name="Shi X."/>
            <person name="Wang X."/>
            <person name="Wu Q."/>
            <person name="Li C."/>
            <person name="Ren X."/>
            <person name="Wang J."/>
            <person name="Wang X."/>
            <person name="Li D."/>
            <person name="Liu D."/>
            <person name="Zhang X."/>
            <person name="Ji Z."/>
            <person name="Zhao W."/>
            <person name="Sun Y."/>
            <person name="Zhang Z."/>
            <person name="Bao J."/>
            <person name="Han Y."/>
            <person name="Dong L."/>
            <person name="Ji J."/>
            <person name="Chen P."/>
            <person name="Wu S."/>
            <person name="Liu J."/>
            <person name="Xiao Y."/>
            <person name="Bu D."/>
            <person name="Tan J."/>
            <person name="Yang L."/>
            <person name="Ye C."/>
            <person name="Zhang J."/>
            <person name="Xu J."/>
            <person name="Zhou Y."/>
            <person name="Yu Y."/>
            <person name="Zhang B."/>
            <person name="Zhuang S."/>
            <person name="Wei H."/>
            <person name="Liu B."/>
            <person name="Lei M."/>
            <person name="Yu H."/>
            <person name="Li Y."/>
            <person name="Xu H."/>
            <person name="Wei S."/>
            <person name="He X."/>
            <person name="Fang L."/>
            <person name="Zhang Z."/>
            <person name="Zhang Y."/>
            <person name="Huang X."/>
            <person name="Su Z."/>
            <person name="Tong W."/>
            <person name="Li J."/>
            <person name="Tong Z."/>
            <person name="Li S."/>
            <person name="Ye J."/>
            <person name="Wang L."/>
            <person name="Fang L."/>
            <person name="Lei T."/>
            <person name="Chen C.-S."/>
            <person name="Chen H.-C."/>
            <person name="Xu Z."/>
            <person name="Li H."/>
            <person name="Huang H."/>
            <person name="Zhang F."/>
            <person name="Xu H."/>
            <person name="Li N."/>
            <person name="Zhao C."/>
            <person name="Li S."/>
            <person name="Dong L."/>
            <person name="Huang Y."/>
            <person name="Li L."/>
            <person name="Xi Y."/>
            <person name="Qi Q."/>
            <person name="Li W."/>
            <person name="Zhang B."/>
            <person name="Hu W."/>
            <person name="Zhang Y."/>
            <person name="Tian X."/>
            <person name="Jiao Y."/>
            <person name="Liang X."/>
            <person name="Jin J."/>
            <person name="Gao L."/>
            <person name="Zheng W."/>
            <person name="Hao B."/>
            <person name="Liu S.-M."/>
            <person name="Wang W."/>
            <person name="Yuan L."/>
            <person name="Cao M."/>
            <person name="McDermott J."/>
            <person name="Samudrala R."/>
            <person name="Wang J."/>
            <person name="Wong G.K.-S."/>
            <person name="Yang H."/>
        </authorList>
    </citation>
    <scope>NUCLEOTIDE SEQUENCE [LARGE SCALE GENOMIC DNA]</scope>
    <source>
        <strain>cv. Nipponbare</strain>
    </source>
</reference>
<reference key="6">
    <citation type="journal article" date="2003" name="Science">
        <title>Collection, mapping, and annotation of over 28,000 cDNA clones from japonica rice.</title>
        <authorList>
            <consortium name="The rice full-length cDNA consortium"/>
        </authorList>
    </citation>
    <scope>NUCLEOTIDE SEQUENCE [LARGE SCALE MRNA]</scope>
    <source>
        <strain>cv. Nipponbare</strain>
    </source>
</reference>
<reference key="7">
    <citation type="journal article" date="2006" name="Plant Cell">
        <title>Wax-deficient anther1 is involved in cuticle and wax production in rice anther walls and is required for pollen development.</title>
        <authorList>
            <person name="Jung K.-H."/>
            <person name="Han M.-J."/>
            <person name="Lee D.-Y."/>
            <person name="Lee Y.-S."/>
            <person name="Schreiber L."/>
            <person name="Franke R."/>
            <person name="Faust A."/>
            <person name="Yephremov A."/>
            <person name="Saedler H."/>
            <person name="Kim Y.-W."/>
            <person name="Hwang I."/>
            <person name="An G."/>
        </authorList>
    </citation>
    <scope>FUNCTION</scope>
    <scope>DISRUPTION PHENOTYPE</scope>
    <scope>TISSUE SPECIFICITY</scope>
    <scope>DEVELOPMENTAL STAGE</scope>
    <scope>CATALYTIC ACTIVITY</scope>
</reference>
<reference key="8">
    <citation type="journal article" date="2009" name="Plant Mol. Biol.">
        <title>Characterization of Glossy1-homologous genes in rice involved in leaf wax accumulation and drought resistance.</title>
        <authorList>
            <person name="Islam M.A."/>
            <person name="Du H."/>
            <person name="Ning J."/>
            <person name="Ye H."/>
            <person name="Xiong L."/>
        </authorList>
    </citation>
    <scope>TISSUE SPECIFICITY</scope>
    <scope>INDUCTION BY SALT STRESS AND ABSCISIC ACID</scope>
    <scope>GENE FAMILY</scope>
    <scope>NOMENCLATURE</scope>
</reference>
<name>GLO15_ORYSJ</name>
<accession>Q7XDI3</accession>
<accession>Q9FWK6</accession>
<feature type="chain" id="PRO_0000445875" description="Very-long-chain aldehyde decarbonylase GL1-5">
    <location>
        <begin position="1"/>
        <end position="621"/>
    </location>
</feature>
<feature type="transmembrane region" description="Helical" evidence="2">
    <location>
        <begin position="99"/>
        <end position="119"/>
    </location>
</feature>
<feature type="transmembrane region" description="Helical" evidence="2">
    <location>
        <begin position="126"/>
        <end position="146"/>
    </location>
</feature>
<feature type="transmembrane region" description="Helical" evidence="2">
    <location>
        <begin position="186"/>
        <end position="206"/>
    </location>
</feature>
<feature type="transmembrane region" description="Helical" evidence="2">
    <location>
        <begin position="224"/>
        <end position="244"/>
    </location>
</feature>
<feature type="transmembrane region" description="Helical" evidence="2">
    <location>
        <begin position="332"/>
        <end position="352"/>
    </location>
</feature>
<feature type="domain" description="Fatty acid hydroxylase" evidence="2">
    <location>
        <begin position="138"/>
        <end position="272"/>
    </location>
</feature>
<feature type="sequence conflict" description="In Ref. 6; AK100751." evidence="7" ref="6">
    <original>S</original>
    <variation>P</variation>
    <location>
        <position position="348"/>
    </location>
</feature>
<sequence length="621" mass="71216">MATNPGLFTEWPWKKLGSFKYVLLAPWVAHGWYEVATKGWREVDLGYIAILPSLLLRMLHNQAWITISRLQNARGRRQIVRRGIEFDQVDRERNWDDQIILSGILLYLGALYVPGGQHLPLWRTDGAGLIALLHAGPVEFLYYWFHRALHHHFLYTHYHSHHHSSIVTEPITSVIHPFAELVAYELLFSIPLIACALTGTASIIAFEMYLIYIDFMNNMGHCNFELVPSWLFTWFPPLKYLMYTPSFHSLHHTQFRTNYSLFMPFYDYIYNTMDKSSDTLYENSLKNNEEEEAVDVVHLTHLTTLHSIYHMRPGFAEFASRPYVSRWYMRMMWPLSWLSMVLTWTYGSSFTVERNVMKKIRMQSWAIPRYSFHYGLDWEKEAINDLIEKAVCEADKNGAKVVSLGLLNQAHTLNKSGEQYLLKYPKLGARIVDGTSLAAAVVVNSIPQGTDQVILAGNVSKVARAVAQALCKKNIKVTMTNKQDYHLLKPEIPETVADNLSFSKTGTAKVWLIGDGLDSAEQFRAQKGTLFIPYSQFPPKMVRKDSCSYSTTPAMAVPKTLQNVHSCENWLPRRVMSAWRIAGILHALEGWNEHECGDKVLDMDKVWSAAIMHGFCPVAQG</sequence>